<accession>Q91VI7</accession>
<accession>Q924P4</accession>
<reference key="1">
    <citation type="submission" date="1998-06" db="EMBL/GenBank/DDBJ databases">
        <title>Mouse homolog of ribonuclease/angiogenesis inhibitor.</title>
        <authorList>
            <person name="Melnick M.B."/>
            <person name="Comb M.J."/>
        </authorList>
    </citation>
    <scope>NUCLEOTIDE SEQUENCE [MRNA]</scope>
</reference>
<reference key="2">
    <citation type="journal article" date="2005" name="Science">
        <title>The transcriptional landscape of the mammalian genome.</title>
        <authorList>
            <person name="Carninci P."/>
            <person name="Kasukawa T."/>
            <person name="Katayama S."/>
            <person name="Gough J."/>
            <person name="Frith M.C."/>
            <person name="Maeda N."/>
            <person name="Oyama R."/>
            <person name="Ravasi T."/>
            <person name="Lenhard B."/>
            <person name="Wells C."/>
            <person name="Kodzius R."/>
            <person name="Shimokawa K."/>
            <person name="Bajic V.B."/>
            <person name="Brenner S.E."/>
            <person name="Batalov S."/>
            <person name="Forrest A.R."/>
            <person name="Zavolan M."/>
            <person name="Davis M.J."/>
            <person name="Wilming L.G."/>
            <person name="Aidinis V."/>
            <person name="Allen J.E."/>
            <person name="Ambesi-Impiombato A."/>
            <person name="Apweiler R."/>
            <person name="Aturaliya R.N."/>
            <person name="Bailey T.L."/>
            <person name="Bansal M."/>
            <person name="Baxter L."/>
            <person name="Beisel K.W."/>
            <person name="Bersano T."/>
            <person name="Bono H."/>
            <person name="Chalk A.M."/>
            <person name="Chiu K.P."/>
            <person name="Choudhary V."/>
            <person name="Christoffels A."/>
            <person name="Clutterbuck D.R."/>
            <person name="Crowe M.L."/>
            <person name="Dalla E."/>
            <person name="Dalrymple B.P."/>
            <person name="de Bono B."/>
            <person name="Della Gatta G."/>
            <person name="di Bernardo D."/>
            <person name="Down T."/>
            <person name="Engstrom P."/>
            <person name="Fagiolini M."/>
            <person name="Faulkner G."/>
            <person name="Fletcher C.F."/>
            <person name="Fukushima T."/>
            <person name="Furuno M."/>
            <person name="Futaki S."/>
            <person name="Gariboldi M."/>
            <person name="Georgii-Hemming P."/>
            <person name="Gingeras T.R."/>
            <person name="Gojobori T."/>
            <person name="Green R.E."/>
            <person name="Gustincich S."/>
            <person name="Harbers M."/>
            <person name="Hayashi Y."/>
            <person name="Hensch T.K."/>
            <person name="Hirokawa N."/>
            <person name="Hill D."/>
            <person name="Huminiecki L."/>
            <person name="Iacono M."/>
            <person name="Ikeo K."/>
            <person name="Iwama A."/>
            <person name="Ishikawa T."/>
            <person name="Jakt M."/>
            <person name="Kanapin A."/>
            <person name="Katoh M."/>
            <person name="Kawasawa Y."/>
            <person name="Kelso J."/>
            <person name="Kitamura H."/>
            <person name="Kitano H."/>
            <person name="Kollias G."/>
            <person name="Krishnan S.P."/>
            <person name="Kruger A."/>
            <person name="Kummerfeld S.K."/>
            <person name="Kurochkin I.V."/>
            <person name="Lareau L.F."/>
            <person name="Lazarevic D."/>
            <person name="Lipovich L."/>
            <person name="Liu J."/>
            <person name="Liuni S."/>
            <person name="McWilliam S."/>
            <person name="Madan Babu M."/>
            <person name="Madera M."/>
            <person name="Marchionni L."/>
            <person name="Matsuda H."/>
            <person name="Matsuzawa S."/>
            <person name="Miki H."/>
            <person name="Mignone F."/>
            <person name="Miyake S."/>
            <person name="Morris K."/>
            <person name="Mottagui-Tabar S."/>
            <person name="Mulder N."/>
            <person name="Nakano N."/>
            <person name="Nakauchi H."/>
            <person name="Ng P."/>
            <person name="Nilsson R."/>
            <person name="Nishiguchi S."/>
            <person name="Nishikawa S."/>
            <person name="Nori F."/>
            <person name="Ohara O."/>
            <person name="Okazaki Y."/>
            <person name="Orlando V."/>
            <person name="Pang K.C."/>
            <person name="Pavan W.J."/>
            <person name="Pavesi G."/>
            <person name="Pesole G."/>
            <person name="Petrovsky N."/>
            <person name="Piazza S."/>
            <person name="Reed J."/>
            <person name="Reid J.F."/>
            <person name="Ring B.Z."/>
            <person name="Ringwald M."/>
            <person name="Rost B."/>
            <person name="Ruan Y."/>
            <person name="Salzberg S.L."/>
            <person name="Sandelin A."/>
            <person name="Schneider C."/>
            <person name="Schoenbach C."/>
            <person name="Sekiguchi K."/>
            <person name="Semple C.A."/>
            <person name="Seno S."/>
            <person name="Sessa L."/>
            <person name="Sheng Y."/>
            <person name="Shibata Y."/>
            <person name="Shimada H."/>
            <person name="Shimada K."/>
            <person name="Silva D."/>
            <person name="Sinclair B."/>
            <person name="Sperling S."/>
            <person name="Stupka E."/>
            <person name="Sugiura K."/>
            <person name="Sultana R."/>
            <person name="Takenaka Y."/>
            <person name="Taki K."/>
            <person name="Tammoja K."/>
            <person name="Tan S.L."/>
            <person name="Tang S."/>
            <person name="Taylor M.S."/>
            <person name="Tegner J."/>
            <person name="Teichmann S.A."/>
            <person name="Ueda H.R."/>
            <person name="van Nimwegen E."/>
            <person name="Verardo R."/>
            <person name="Wei C.L."/>
            <person name="Yagi K."/>
            <person name="Yamanishi H."/>
            <person name="Zabarovsky E."/>
            <person name="Zhu S."/>
            <person name="Zimmer A."/>
            <person name="Hide W."/>
            <person name="Bult C."/>
            <person name="Grimmond S.M."/>
            <person name="Teasdale R.D."/>
            <person name="Liu E.T."/>
            <person name="Brusic V."/>
            <person name="Quackenbush J."/>
            <person name="Wahlestedt C."/>
            <person name="Mattick J.S."/>
            <person name="Hume D.A."/>
            <person name="Kai C."/>
            <person name="Sasaki D."/>
            <person name="Tomaru Y."/>
            <person name="Fukuda S."/>
            <person name="Kanamori-Katayama M."/>
            <person name="Suzuki M."/>
            <person name="Aoki J."/>
            <person name="Arakawa T."/>
            <person name="Iida J."/>
            <person name="Imamura K."/>
            <person name="Itoh M."/>
            <person name="Kato T."/>
            <person name="Kawaji H."/>
            <person name="Kawagashira N."/>
            <person name="Kawashima T."/>
            <person name="Kojima M."/>
            <person name="Kondo S."/>
            <person name="Konno H."/>
            <person name="Nakano K."/>
            <person name="Ninomiya N."/>
            <person name="Nishio T."/>
            <person name="Okada M."/>
            <person name="Plessy C."/>
            <person name="Shibata K."/>
            <person name="Shiraki T."/>
            <person name="Suzuki S."/>
            <person name="Tagami M."/>
            <person name="Waki K."/>
            <person name="Watahiki A."/>
            <person name="Okamura-Oho Y."/>
            <person name="Suzuki H."/>
            <person name="Kawai J."/>
            <person name="Hayashizaki Y."/>
        </authorList>
    </citation>
    <scope>NUCLEOTIDE SEQUENCE [LARGE SCALE MRNA]</scope>
    <source>
        <strain>C57BL/6J</strain>
        <tissue>Kidney</tissue>
    </source>
</reference>
<reference key="3">
    <citation type="journal article" date="2004" name="Genome Res.">
        <title>The status, quality, and expansion of the NIH full-length cDNA project: the Mammalian Gene Collection (MGC).</title>
        <authorList>
            <consortium name="The MGC Project Team"/>
        </authorList>
    </citation>
    <scope>NUCLEOTIDE SEQUENCE [LARGE SCALE MRNA]</scope>
    <source>
        <strain>NMRI</strain>
        <tissue>Mammary tumor</tissue>
    </source>
</reference>
<reference key="4">
    <citation type="journal article" date="2010" name="Cell">
        <title>A tissue-specific atlas of mouse protein phosphorylation and expression.</title>
        <authorList>
            <person name="Huttlin E.L."/>
            <person name="Jedrychowski M.P."/>
            <person name="Elias J.E."/>
            <person name="Goswami T."/>
            <person name="Rad R."/>
            <person name="Beausoleil S.A."/>
            <person name="Villen J."/>
            <person name="Haas W."/>
            <person name="Sowa M.E."/>
            <person name="Gygi S.P."/>
        </authorList>
    </citation>
    <scope>IDENTIFICATION BY MASS SPECTROMETRY [LARGE SCALE ANALYSIS]</scope>
    <source>
        <tissue>Brain</tissue>
        <tissue>Brown adipose tissue</tissue>
        <tissue>Heart</tissue>
        <tissue>Kidney</tissue>
        <tissue>Liver</tissue>
        <tissue>Lung</tissue>
        <tissue>Pancreas</tissue>
        <tissue>Spleen</tissue>
        <tissue>Testis</tissue>
    </source>
</reference>
<dbReference type="EMBL" id="AF071546">
    <property type="protein sequence ID" value="AAK68859.1"/>
    <property type="molecule type" value="mRNA"/>
</dbReference>
<dbReference type="EMBL" id="AK133822">
    <property type="protein sequence ID" value="BAE21862.1"/>
    <property type="molecule type" value="mRNA"/>
</dbReference>
<dbReference type="EMBL" id="AK141351">
    <property type="protein sequence ID" value="BAE24659.1"/>
    <property type="molecule type" value="mRNA"/>
</dbReference>
<dbReference type="EMBL" id="AK147059">
    <property type="protein sequence ID" value="BAE27643.1"/>
    <property type="molecule type" value="mRNA"/>
</dbReference>
<dbReference type="EMBL" id="BC010331">
    <property type="protein sequence ID" value="AAH10331.1"/>
    <property type="molecule type" value="mRNA"/>
</dbReference>
<dbReference type="CCDS" id="CCDS22002.1"/>
<dbReference type="RefSeq" id="NP_001165571.1">
    <property type="nucleotide sequence ID" value="NM_001172100.1"/>
</dbReference>
<dbReference type="RefSeq" id="NP_001165572.1">
    <property type="nucleotide sequence ID" value="NM_001172101.1"/>
</dbReference>
<dbReference type="RefSeq" id="NP_660117.2">
    <property type="nucleotide sequence ID" value="NM_145135.3"/>
</dbReference>
<dbReference type="PDB" id="3TSR">
    <property type="method" value="X-ray"/>
    <property type="resolution" value="2.20 A"/>
    <property type="chains" value="E/F/G/H=1-456"/>
</dbReference>
<dbReference type="PDBsum" id="3TSR"/>
<dbReference type="SMR" id="Q91VI7"/>
<dbReference type="BioGRID" id="223500">
    <property type="interactions" value="14"/>
</dbReference>
<dbReference type="FunCoup" id="Q91VI7">
    <property type="interactions" value="1092"/>
</dbReference>
<dbReference type="IntAct" id="Q91VI7">
    <property type="interactions" value="4"/>
</dbReference>
<dbReference type="MINT" id="Q91VI7"/>
<dbReference type="STRING" id="10090.ENSMUSP00000147928"/>
<dbReference type="GlyGen" id="Q91VI7">
    <property type="glycosylation" value="1 site, 1 O-linked glycan (1 site)"/>
</dbReference>
<dbReference type="iPTMnet" id="Q91VI7"/>
<dbReference type="PhosphoSitePlus" id="Q91VI7"/>
<dbReference type="SwissPalm" id="Q91VI7"/>
<dbReference type="CPTAC" id="non-CPTAC-3997"/>
<dbReference type="jPOST" id="Q91VI7"/>
<dbReference type="PaxDb" id="10090-ENSMUSP00000101651"/>
<dbReference type="PeptideAtlas" id="Q91VI7"/>
<dbReference type="ProteomicsDB" id="255277"/>
<dbReference type="Pumba" id="Q91VI7"/>
<dbReference type="Antibodypedia" id="22490">
    <property type="antibodies" value="465 antibodies from 31 providers"/>
</dbReference>
<dbReference type="DNASU" id="107702"/>
<dbReference type="Ensembl" id="ENSMUST00000106033.5">
    <property type="protein sequence ID" value="ENSMUSP00000101651.4"/>
    <property type="gene ID" value="ENSMUSG00000038650.16"/>
</dbReference>
<dbReference type="Ensembl" id="ENSMUST00000167493.9">
    <property type="protein sequence ID" value="ENSMUSP00000133061.2"/>
    <property type="gene ID" value="ENSMUSG00000038650.16"/>
</dbReference>
<dbReference type="GeneID" id="107702"/>
<dbReference type="KEGG" id="mmu:107702"/>
<dbReference type="UCSC" id="uc009kjs.2">
    <property type="organism name" value="mouse"/>
</dbReference>
<dbReference type="AGR" id="MGI:1195456"/>
<dbReference type="CTD" id="6050"/>
<dbReference type="MGI" id="MGI:1195456">
    <property type="gene designation" value="Rnh1"/>
</dbReference>
<dbReference type="VEuPathDB" id="HostDB:ENSMUSG00000038650"/>
<dbReference type="eggNOG" id="KOG4308">
    <property type="taxonomic scope" value="Eukaryota"/>
</dbReference>
<dbReference type="GeneTree" id="ENSGT00940000161492"/>
<dbReference type="HOGENOM" id="CLU_002274_4_6_1"/>
<dbReference type="InParanoid" id="Q91VI7"/>
<dbReference type="OMA" id="CQLECLW"/>
<dbReference type="OrthoDB" id="120976at2759"/>
<dbReference type="PhylomeDB" id="Q91VI7"/>
<dbReference type="BioGRID-ORCS" id="107702">
    <property type="hits" value="4 hits in 75 CRISPR screens"/>
</dbReference>
<dbReference type="ChiTaRS" id="Rnh1">
    <property type="organism name" value="mouse"/>
</dbReference>
<dbReference type="EvolutionaryTrace" id="Q91VI7"/>
<dbReference type="PRO" id="PR:Q91VI7"/>
<dbReference type="Proteomes" id="UP000000589">
    <property type="component" value="Chromosome 7"/>
</dbReference>
<dbReference type="RNAct" id="Q91VI7">
    <property type="molecule type" value="protein"/>
</dbReference>
<dbReference type="Bgee" id="ENSMUSG00000038650">
    <property type="expression patterns" value="Expressed in vault of skull and 267 other cell types or tissues"/>
</dbReference>
<dbReference type="ExpressionAtlas" id="Q91VI7">
    <property type="expression patterns" value="baseline and differential"/>
</dbReference>
<dbReference type="GO" id="GO:0032311">
    <property type="term" value="C:angiogenin-PRI complex"/>
    <property type="evidence" value="ECO:0007669"/>
    <property type="project" value="Ensembl"/>
</dbReference>
<dbReference type="GO" id="GO:0005737">
    <property type="term" value="C:cytoplasm"/>
    <property type="evidence" value="ECO:0000250"/>
    <property type="project" value="UniProtKB"/>
</dbReference>
<dbReference type="GO" id="GO:0005829">
    <property type="term" value="C:cytosol"/>
    <property type="evidence" value="ECO:0007669"/>
    <property type="project" value="Ensembl"/>
</dbReference>
<dbReference type="GO" id="GO:0005654">
    <property type="term" value="C:nucleoplasm"/>
    <property type="evidence" value="ECO:0007669"/>
    <property type="project" value="Ensembl"/>
</dbReference>
<dbReference type="GO" id="GO:0005634">
    <property type="term" value="C:nucleus"/>
    <property type="evidence" value="ECO:0000250"/>
    <property type="project" value="UniProtKB"/>
</dbReference>
<dbReference type="GO" id="GO:0008428">
    <property type="term" value="F:ribonuclease inhibitor activity"/>
    <property type="evidence" value="ECO:0000250"/>
    <property type="project" value="UniProtKB"/>
</dbReference>
<dbReference type="GO" id="GO:0045765">
    <property type="term" value="P:regulation of angiogenesis"/>
    <property type="evidence" value="ECO:0007669"/>
    <property type="project" value="Ensembl"/>
</dbReference>
<dbReference type="GO" id="GO:0036416">
    <property type="term" value="P:tRNA stabilization"/>
    <property type="evidence" value="ECO:0007669"/>
    <property type="project" value="Ensembl"/>
</dbReference>
<dbReference type="CDD" id="cd00116">
    <property type="entry name" value="LRR_RI"/>
    <property type="match status" value="1"/>
</dbReference>
<dbReference type="FunFam" id="3.80.10.10:FF:000440">
    <property type="entry name" value="Ribonuclease inhibitor"/>
    <property type="match status" value="1"/>
</dbReference>
<dbReference type="Gene3D" id="3.80.10.10">
    <property type="entry name" value="Ribonuclease Inhibitor"/>
    <property type="match status" value="1"/>
</dbReference>
<dbReference type="InterPro" id="IPR001611">
    <property type="entry name" value="Leu-rich_rpt"/>
</dbReference>
<dbReference type="InterPro" id="IPR032675">
    <property type="entry name" value="LRR_dom_sf"/>
</dbReference>
<dbReference type="InterPro" id="IPR041302">
    <property type="entry name" value="LRR_RI_cap"/>
</dbReference>
<dbReference type="InterPro" id="IPR050637">
    <property type="entry name" value="NLRP_innate_immun_reg"/>
</dbReference>
<dbReference type="PANTHER" id="PTHR45690">
    <property type="entry name" value="NACHT, LRR AND PYD DOMAINS-CONTAINING PROTEIN 12"/>
    <property type="match status" value="1"/>
</dbReference>
<dbReference type="PANTHER" id="PTHR45690:SF19">
    <property type="entry name" value="NACHT, LRR AND PYD DOMAINS-CONTAINING PROTEIN 3"/>
    <property type="match status" value="1"/>
</dbReference>
<dbReference type="Pfam" id="PF13516">
    <property type="entry name" value="LRR_6"/>
    <property type="match status" value="7"/>
</dbReference>
<dbReference type="Pfam" id="PF18779">
    <property type="entry name" value="LRR_RI_capping"/>
    <property type="match status" value="1"/>
</dbReference>
<dbReference type="SMART" id="SM00368">
    <property type="entry name" value="LRR_RI"/>
    <property type="match status" value="13"/>
</dbReference>
<dbReference type="SUPFAM" id="SSF52047">
    <property type="entry name" value="RNI-like"/>
    <property type="match status" value="2"/>
</dbReference>
<sequence>MSLDIQCEQLSDARWTELLPLIQQYEVVRLDDCGLTEVRCKDISSAVQANPALTELSLRTNELGDGGVGLVLQGLQNPTCKIQKLSLQNCGLTEAGCGILPGMLRSLSTLRELHLNDNPMGDAGLKLLCEGLQDPQCRLEKLQLEYCNLTATSCEPLASVLRVKADFKELVLSNNDLHEPGVRILCQGLKDSACQLESLKLENCGITAANCKDLCDVVASKASLQELDLSSNKLGNAGIAALCPGLLLPSCKLRTLWLWECDITAEGCKDLCRVLRAKQSLKELSLASNELKDEGARLLCESLLEPGCQLESLWIKTCSLTAASCPYFCSVLTKSRSLLELQMSSNPLGDEGVQELCKALSQPDTVLRELWLGDCDVTNSGCSSLANVLLANRSLRELDLSNNCMGGPGVLQLLESLKQPSCTLQQLVLYDIYWTNEVEEQLRALEEERPSLRIIS</sequence>
<evidence type="ECO:0000250" key="1">
    <source>
        <dbReference type="UniProtKB" id="P10775"/>
    </source>
</evidence>
<evidence type="ECO:0000250" key="2">
    <source>
        <dbReference type="UniProtKB" id="P13489"/>
    </source>
</evidence>
<evidence type="ECO:0000303" key="3">
    <source ref="1"/>
</evidence>
<evidence type="ECO:0000305" key="4"/>
<evidence type="ECO:0007829" key="5">
    <source>
        <dbReference type="PDB" id="3TSR"/>
    </source>
</evidence>
<feature type="chain" id="PRO_0000097344" description="Ribonuclease inhibitor">
    <location>
        <begin position="1"/>
        <end position="456"/>
    </location>
</feature>
<feature type="repeat" description="LRR 1">
    <location>
        <begin position="15"/>
        <end position="43"/>
    </location>
</feature>
<feature type="repeat" description="LRR 2">
    <location>
        <begin position="44"/>
        <end position="71"/>
    </location>
</feature>
<feature type="repeat" description="LRR 3">
    <location>
        <begin position="72"/>
        <end position="100"/>
    </location>
</feature>
<feature type="repeat" description="LRR 4">
    <location>
        <begin position="101"/>
        <end position="128"/>
    </location>
</feature>
<feature type="repeat" description="LRR 5">
    <location>
        <begin position="129"/>
        <end position="157"/>
    </location>
</feature>
<feature type="repeat" description="LRR 6">
    <location>
        <begin position="158"/>
        <end position="185"/>
    </location>
</feature>
<feature type="repeat" description="LRR 7">
    <location>
        <begin position="186"/>
        <end position="214"/>
    </location>
</feature>
<feature type="repeat" description="LRR 8">
    <location>
        <begin position="215"/>
        <end position="242"/>
    </location>
</feature>
<feature type="repeat" description="LRR 9">
    <location>
        <begin position="243"/>
        <end position="271"/>
    </location>
</feature>
<feature type="repeat" description="LRR 10">
    <location>
        <begin position="272"/>
        <end position="299"/>
    </location>
</feature>
<feature type="repeat" description="LRR 11">
    <location>
        <begin position="300"/>
        <end position="328"/>
    </location>
</feature>
<feature type="repeat" description="LRR 12">
    <location>
        <begin position="329"/>
        <end position="356"/>
    </location>
</feature>
<feature type="repeat" description="LRR 13">
    <location>
        <begin position="357"/>
        <end position="385"/>
    </location>
</feature>
<feature type="repeat" description="LRR 14">
    <location>
        <begin position="386"/>
        <end position="413"/>
    </location>
</feature>
<feature type="repeat" description="LRR 15">
    <location>
        <begin position="414"/>
        <end position="442"/>
    </location>
</feature>
<feature type="modified residue" description="N-acetylmethionine" evidence="1">
    <location>
        <position position="1"/>
    </location>
</feature>
<feature type="modified residue" description="Phosphoserine" evidence="2">
    <location>
        <position position="86"/>
    </location>
</feature>
<feature type="sequence conflict" description="In Ref. 1; AAK68859." evidence="4" ref="1">
    <original>S</original>
    <variation>G</variation>
    <location>
        <position position="11"/>
    </location>
</feature>
<feature type="sequence conflict" description="In Ref. 1; AAK68859." evidence="4" ref="1">
    <original>V</original>
    <variation>A</variation>
    <location>
        <position position="68"/>
    </location>
</feature>
<feature type="sequence conflict" description="In Ref. 1; AAK68859." evidence="4" ref="1">
    <original>R</original>
    <variation>G</variation>
    <location>
        <position position="254"/>
    </location>
</feature>
<feature type="sequence conflict" description="In Ref. 1; AAK68859." evidence="4" ref="1">
    <original>K</original>
    <variation>N</variation>
    <location>
        <position position="278"/>
    </location>
</feature>
<feature type="sequence conflict" description="In Ref. 1; AAK68859." evidence="4" ref="1">
    <original>E</original>
    <variation>G</variation>
    <location>
        <position position="448"/>
    </location>
</feature>
<feature type="strand" evidence="5">
    <location>
        <begin position="1"/>
        <end position="7"/>
    </location>
</feature>
<feature type="helix" evidence="5">
    <location>
        <begin position="12"/>
        <end position="22"/>
    </location>
</feature>
<feature type="strand" evidence="5">
    <location>
        <begin position="26"/>
        <end position="33"/>
    </location>
</feature>
<feature type="helix" evidence="5">
    <location>
        <begin position="37"/>
        <end position="39"/>
    </location>
</feature>
<feature type="helix" evidence="5">
    <location>
        <begin position="40"/>
        <end position="48"/>
    </location>
</feature>
<feature type="strand" evidence="5">
    <location>
        <begin position="55"/>
        <end position="57"/>
    </location>
</feature>
<feature type="helix" evidence="5">
    <location>
        <begin position="64"/>
        <end position="74"/>
    </location>
</feature>
<feature type="strand" evidence="5">
    <location>
        <begin position="84"/>
        <end position="86"/>
    </location>
</feature>
<feature type="helix" evidence="5">
    <location>
        <begin position="94"/>
        <end position="99"/>
    </location>
</feature>
<feature type="helix" evidence="5">
    <location>
        <begin position="100"/>
        <end position="106"/>
    </location>
</feature>
<feature type="strand" evidence="5">
    <location>
        <begin position="112"/>
        <end position="114"/>
    </location>
</feature>
<feature type="helix" evidence="5">
    <location>
        <begin position="121"/>
        <end position="132"/>
    </location>
</feature>
<feature type="strand" evidence="5">
    <location>
        <begin position="140"/>
        <end position="143"/>
    </location>
</feature>
<feature type="helix" evidence="5">
    <location>
        <begin position="151"/>
        <end position="153"/>
    </location>
</feature>
<feature type="helix" evidence="5">
    <location>
        <begin position="154"/>
        <end position="163"/>
    </location>
</feature>
<feature type="strand" evidence="5">
    <location>
        <begin position="169"/>
        <end position="171"/>
    </location>
</feature>
<feature type="helix" evidence="5">
    <location>
        <begin position="178"/>
        <end position="191"/>
    </location>
</feature>
<feature type="strand" evidence="5">
    <location>
        <begin position="198"/>
        <end position="200"/>
    </location>
</feature>
<feature type="helix" evidence="5">
    <location>
        <begin position="208"/>
        <end position="210"/>
    </location>
</feature>
<feature type="helix" evidence="5">
    <location>
        <begin position="211"/>
        <end position="220"/>
    </location>
</feature>
<feature type="strand" evidence="5">
    <location>
        <begin position="226"/>
        <end position="228"/>
    </location>
</feature>
<feature type="strand" evidence="5">
    <location>
        <begin position="231"/>
        <end position="233"/>
    </location>
</feature>
<feature type="helix" evidence="5">
    <location>
        <begin position="235"/>
        <end position="246"/>
    </location>
</feature>
<feature type="strand" evidence="5">
    <location>
        <begin position="255"/>
        <end position="257"/>
    </location>
</feature>
<feature type="helix" evidence="5">
    <location>
        <begin position="265"/>
        <end position="277"/>
    </location>
</feature>
<feature type="strand" evidence="5">
    <location>
        <begin position="283"/>
        <end position="285"/>
    </location>
</feature>
<feature type="helix" evidence="5">
    <location>
        <begin position="292"/>
        <end position="303"/>
    </location>
</feature>
<feature type="strand" evidence="5">
    <location>
        <begin position="312"/>
        <end position="314"/>
    </location>
</feature>
<feature type="helix" evidence="5">
    <location>
        <begin position="322"/>
        <end position="324"/>
    </location>
</feature>
<feature type="helix" evidence="5">
    <location>
        <begin position="325"/>
        <end position="334"/>
    </location>
</feature>
<feature type="strand" evidence="5">
    <location>
        <begin position="340"/>
        <end position="342"/>
    </location>
</feature>
<feature type="helix" evidence="5">
    <location>
        <begin position="349"/>
        <end position="360"/>
    </location>
</feature>
<feature type="strand" evidence="5">
    <location>
        <begin position="369"/>
        <end position="371"/>
    </location>
</feature>
<feature type="helix" evidence="5">
    <location>
        <begin position="379"/>
        <end position="381"/>
    </location>
</feature>
<feature type="helix" evidence="5">
    <location>
        <begin position="382"/>
        <end position="391"/>
    </location>
</feature>
<feature type="strand" evidence="5">
    <location>
        <begin position="397"/>
        <end position="399"/>
    </location>
</feature>
<feature type="helix" evidence="5">
    <location>
        <begin position="407"/>
        <end position="417"/>
    </location>
</feature>
<feature type="strand" evidence="5">
    <location>
        <begin position="426"/>
        <end position="428"/>
    </location>
</feature>
<feature type="helix" evidence="5">
    <location>
        <begin position="436"/>
        <end position="448"/>
    </location>
</feature>
<feature type="strand" evidence="5">
    <location>
        <begin position="453"/>
        <end position="455"/>
    </location>
</feature>
<name>RINI_MOUSE</name>
<keyword id="KW-0002">3D-structure</keyword>
<keyword id="KW-0007">Acetylation</keyword>
<keyword id="KW-0963">Cytoplasm</keyword>
<keyword id="KW-0433">Leucine-rich repeat</keyword>
<keyword id="KW-0539">Nucleus</keyword>
<keyword id="KW-0597">Phosphoprotein</keyword>
<keyword id="KW-1185">Reference proteome</keyword>
<keyword id="KW-0677">Repeat</keyword>
<gene>
    <name type="primary">Rnh1</name>
    <name type="synonym">Rnh</name>
</gene>
<protein>
    <recommendedName>
        <fullName>Ribonuclease inhibitor</fullName>
    </recommendedName>
    <alternativeName>
        <fullName evidence="3">Ribonuclease/angiogenin inhibitor 1</fullName>
    </alternativeName>
</protein>
<organism>
    <name type="scientific">Mus musculus</name>
    <name type="common">Mouse</name>
    <dbReference type="NCBI Taxonomy" id="10090"/>
    <lineage>
        <taxon>Eukaryota</taxon>
        <taxon>Metazoa</taxon>
        <taxon>Chordata</taxon>
        <taxon>Craniata</taxon>
        <taxon>Vertebrata</taxon>
        <taxon>Euteleostomi</taxon>
        <taxon>Mammalia</taxon>
        <taxon>Eutheria</taxon>
        <taxon>Euarchontoglires</taxon>
        <taxon>Glires</taxon>
        <taxon>Rodentia</taxon>
        <taxon>Myomorpha</taxon>
        <taxon>Muroidea</taxon>
        <taxon>Muridae</taxon>
        <taxon>Murinae</taxon>
        <taxon>Mus</taxon>
        <taxon>Mus</taxon>
    </lineage>
</organism>
<proteinExistence type="evidence at protein level"/>
<comment type="function">
    <text evidence="2">Ribonuclease inhibitor which inhibits RNASE1, RNASE2 and angiogenin (ANG). May play a role in redox homeostasis. Required to inhibit the cytotoxic tRNA ribonuclease activity of ANG in the cytoplasm in absence of stress. Relocates to the nucleus in response to stress, relieving inhibition of ANG in the cytoplasm, and inhibiting the angiogenic activity of ANG in the nucleus.</text>
</comment>
<comment type="subunit">
    <text evidence="2">Forms high-affinity heterodimers with RNASE1, ANG and RNASE2.</text>
</comment>
<comment type="subcellular location">
    <subcellularLocation>
        <location evidence="2">Cytoplasm</location>
    </subcellularLocation>
    <subcellularLocation>
        <location evidence="2">Nucleus</location>
    </subcellularLocation>
    <text evidence="2">Localizes in the cytoplasm in absence of stress; translocates to the nucleus in response to stress.</text>
</comment>
<comment type="domain">
    <text evidence="2">The LRR domain forms a horseshoe-shaped structure that interacts tightly with target RNases via a large protein interaction surface on its interior side.</text>
</comment>